<gene>
    <name evidence="5" type="primary">nodR</name>
</gene>
<accession>A0A2I6PJ12</accession>
<feature type="chain" id="PRO_0000446581" description="Cytochrome P450 monooxygenase nodR">
    <location>
        <begin position="1"/>
        <end position="511"/>
    </location>
</feature>
<feature type="transmembrane region" description="Helical" evidence="2">
    <location>
        <begin position="8"/>
        <end position="28"/>
    </location>
</feature>
<feature type="binding site" description="axial binding residue" evidence="1">
    <location>
        <position position="452"/>
    </location>
    <ligand>
        <name>heme</name>
        <dbReference type="ChEBI" id="CHEBI:30413"/>
    </ligand>
    <ligandPart>
        <name>Fe</name>
        <dbReference type="ChEBI" id="CHEBI:18248"/>
    </ligandPart>
</feature>
<feature type="glycosylation site" description="N-linked (GlcNAc...) asparagine" evidence="3">
    <location>
        <position position="76"/>
    </location>
</feature>
<feature type="glycosylation site" description="N-linked (GlcNAc...) asparagine" evidence="3">
    <location>
        <position position="373"/>
    </location>
</feature>
<organism>
    <name type="scientific">Hypoxylon pulicicidum</name>
    <dbReference type="NCBI Taxonomy" id="1243767"/>
    <lineage>
        <taxon>Eukaryota</taxon>
        <taxon>Fungi</taxon>
        <taxon>Dikarya</taxon>
        <taxon>Ascomycota</taxon>
        <taxon>Pezizomycotina</taxon>
        <taxon>Sordariomycetes</taxon>
        <taxon>Xylariomycetidae</taxon>
        <taxon>Xylariales</taxon>
        <taxon>Hypoxylaceae</taxon>
        <taxon>Hypoxylon</taxon>
    </lineage>
</organism>
<name>NODR_HYPPI</name>
<dbReference type="EC" id="1.-.-.-" evidence="7"/>
<dbReference type="EMBL" id="MG182145">
    <property type="protein sequence ID" value="AUM60066.1"/>
    <property type="molecule type" value="Genomic_DNA"/>
</dbReference>
<dbReference type="SMR" id="A0A2I6PJ12"/>
<dbReference type="GlyCosmos" id="A0A2I6PJ12">
    <property type="glycosylation" value="2 sites, No reported glycans"/>
</dbReference>
<dbReference type="GO" id="GO:0016020">
    <property type="term" value="C:membrane"/>
    <property type="evidence" value="ECO:0007669"/>
    <property type="project" value="UniProtKB-SubCell"/>
</dbReference>
<dbReference type="GO" id="GO:0020037">
    <property type="term" value="F:heme binding"/>
    <property type="evidence" value="ECO:0007669"/>
    <property type="project" value="InterPro"/>
</dbReference>
<dbReference type="GO" id="GO:0005506">
    <property type="term" value="F:iron ion binding"/>
    <property type="evidence" value="ECO:0007669"/>
    <property type="project" value="InterPro"/>
</dbReference>
<dbReference type="GO" id="GO:0004497">
    <property type="term" value="F:monooxygenase activity"/>
    <property type="evidence" value="ECO:0007669"/>
    <property type="project" value="UniProtKB-KW"/>
</dbReference>
<dbReference type="GO" id="GO:0016705">
    <property type="term" value="F:oxidoreductase activity, acting on paired donors, with incorporation or reduction of molecular oxygen"/>
    <property type="evidence" value="ECO:0007669"/>
    <property type="project" value="InterPro"/>
</dbReference>
<dbReference type="GO" id="GO:0019748">
    <property type="term" value="P:secondary metabolic process"/>
    <property type="evidence" value="ECO:0007669"/>
    <property type="project" value="UniProtKB-ARBA"/>
</dbReference>
<dbReference type="CDD" id="cd11041">
    <property type="entry name" value="CYP503A1-like"/>
    <property type="match status" value="1"/>
</dbReference>
<dbReference type="Gene3D" id="1.10.630.10">
    <property type="entry name" value="Cytochrome P450"/>
    <property type="match status" value="1"/>
</dbReference>
<dbReference type="InterPro" id="IPR001128">
    <property type="entry name" value="Cyt_P450"/>
</dbReference>
<dbReference type="InterPro" id="IPR002403">
    <property type="entry name" value="Cyt_P450_E_grp-IV"/>
</dbReference>
<dbReference type="InterPro" id="IPR036396">
    <property type="entry name" value="Cyt_P450_sf"/>
</dbReference>
<dbReference type="PANTHER" id="PTHR46206">
    <property type="entry name" value="CYTOCHROME P450"/>
    <property type="match status" value="1"/>
</dbReference>
<dbReference type="PANTHER" id="PTHR46206:SF2">
    <property type="entry name" value="CYTOCHROME P450 MONOOXYGENASE AUSG-RELATED"/>
    <property type="match status" value="1"/>
</dbReference>
<dbReference type="Pfam" id="PF00067">
    <property type="entry name" value="p450"/>
    <property type="match status" value="1"/>
</dbReference>
<dbReference type="PRINTS" id="PR00465">
    <property type="entry name" value="EP450IV"/>
</dbReference>
<dbReference type="SUPFAM" id="SSF48264">
    <property type="entry name" value="Cytochrome P450"/>
    <property type="match status" value="1"/>
</dbReference>
<reference key="1">
    <citation type="journal article" date="2018" name="J. Am. Chem. Soc.">
        <title>Heterologous biosynthesis of nodulisporic acid F.</title>
        <authorList>
            <person name="Van de Bittner K.C."/>
            <person name="Nicholson M.J."/>
            <person name="Bustamante L.Y."/>
            <person name="Kessans S.A."/>
            <person name="Ram A."/>
            <person name="van Dolleweerd C.J."/>
            <person name="Scott B."/>
            <person name="Parker E.J."/>
        </authorList>
    </citation>
    <scope>NUCLEOTIDE SEQUENCE [GENOMIC DNA]</scope>
    <scope>IDENTIFICATION</scope>
    <scope>FUNCTION</scope>
    <scope>PATHWAY</scope>
    <source>
        <strain>MF5954 / ATCC 74245</strain>
    </source>
</reference>
<comment type="function">
    <text evidence="4 7">Cytochrome P450 monooxygenase; part of the gene cluster that mediates the biosynthesis of the indole diterpenes nodulisporic acids (NA). Nodulisporic acid A (NAA) and its chemically modified derivatives are of particular significance because of their highly potent insecticidal activity against blood-feeding arthropods and lack of observable adverse effects on mammals, in particular the tremogenicity associated with the paspaline-derived IDTs is not observed (PubMed:29283570). The geranylgeranyl diphosphate (GGPP) synthase ggs1, localized outside of the cluster, is proposed to catalyze the first step in nodulisporic acid biosynthesis via conversion of farnesyl pyrophosphate and isopentyl pyrophosphate into geranylgeranyl pyrophosphate (GGPP) (PubMed:29283570). Condensation of indole-3-glycerol phosphate with GGPP by the prenyl transferase nodC then forms 3-geranylgeranylindole (3-GGI) (PubMed:29283570). Epoxidation by the FAD-dependent monooxygenase nodM leads to a single-epoxidized-GGI that is substrate of the terpene cyclase nodB for cyclization to yield emindole SB (PubMed:29283570). The terminal methyl carbon, C28, of emindole SB is then oxidized by the cytochrome P450 monooxygenase nodW to produce nodulisporic acid F (NAF), the pentacyclic core of NAA (PubMed:29283570). NAF is converted to nodulisporic acid E (NAE) via prenylation. This step is probably performed by one of the indole diterpene prenyltransferases nodD1 or nodD2 (Probable). Several oxidation steps performed by the FAD-linked oxidoreductase nodO and one of the cytochrome P450 monooxygenase nodR, nodX or nodZ further convert NAE to nodulisporic acid D (NAD) (Probable). NAD is substrate of cytochrome P450 monooxygenase nodJ to produce the precursor of nodulisporic acid C (NAC), converted to NAC by one of the indole diterpene prenyltransferases nodD1 or nodD2 (Probable). The FAD-dependent monooxygenase nodY2 then oxidizes NAC to nodulisporic acid B (NAB) (Probable). Finally NAB is converted to NAA by one of the cytochrome P450 monooxygenases nodR, nodX or nodZ (Probable).</text>
</comment>
<comment type="cofactor">
    <cofactor evidence="1">
        <name>heme</name>
        <dbReference type="ChEBI" id="CHEBI:30413"/>
    </cofactor>
</comment>
<comment type="pathway">
    <text evidence="7">Secondary metabolite biosynthesis.</text>
</comment>
<comment type="subcellular location">
    <subcellularLocation>
        <location evidence="2">Membrane</location>
        <topology evidence="2">Single-pass membrane protein</topology>
    </subcellularLocation>
</comment>
<comment type="similarity">
    <text evidence="6">Belongs to the cytochrome P450 family.</text>
</comment>
<protein>
    <recommendedName>
        <fullName evidence="5">Cytochrome P450 monooxygenase nodR</fullName>
        <ecNumber evidence="7">1.-.-.-</ecNumber>
    </recommendedName>
    <alternativeName>
        <fullName evidence="5">Nodulisporic acid biosynthesis cluster protein R</fullName>
    </alternativeName>
</protein>
<evidence type="ECO:0000250" key="1">
    <source>
        <dbReference type="UniProtKB" id="P04798"/>
    </source>
</evidence>
<evidence type="ECO:0000255" key="2"/>
<evidence type="ECO:0000255" key="3">
    <source>
        <dbReference type="PROSITE-ProRule" id="PRU00498"/>
    </source>
</evidence>
<evidence type="ECO:0000269" key="4">
    <source>
    </source>
</evidence>
<evidence type="ECO:0000303" key="5">
    <source>
    </source>
</evidence>
<evidence type="ECO:0000305" key="6"/>
<evidence type="ECO:0000305" key="7">
    <source>
    </source>
</evidence>
<keyword id="KW-0325">Glycoprotein</keyword>
<keyword id="KW-0349">Heme</keyword>
<keyword id="KW-0408">Iron</keyword>
<keyword id="KW-0472">Membrane</keyword>
<keyword id="KW-0479">Metal-binding</keyword>
<keyword id="KW-0503">Monooxygenase</keyword>
<keyword id="KW-0560">Oxidoreductase</keyword>
<keyword id="KW-0812">Transmembrane</keyword>
<keyword id="KW-1133">Transmembrane helix</keyword>
<proteinExistence type="inferred from homology"/>
<sequence length="511" mass="58559">MFDIDFGILFPISWEQSPIFLAVGLIFAFATLSPWLRSGERLINGREGFEILWTNAKKRYQTKGRSVMEAGFSKYNDSFYMMTDSGTEMVLHPRYVDEIRNDPRLDFHRYMKTKGGEINRDLIQTKLTRSVGRLIGSISAEIEDALHNRWEEGEGEYEEYLLVLPPAEMHTEWHEIVLLSVMIPVVAQGVSKMFVGDPLCRNKDWIGMILRHTRSVQTALRSLRLWPYFLRPLAARFLPTCRQVTAEIEEARRIINPVLEKKRAEKLAMIQKGEKPPEPNTYMDWLEESDKDEFYDPVVAQLKISMAAIHATSDLLSQTIFSLCDSPELVKELRAEAVSVIGAYGWGKEAIYNLKLMDSVLKETQRLKPMQINLTRLALDRIKLSDGTVIPRGSKVLISCHNMWDSNVYPNANQYDGHRFYKLRQRAGMENSAQLSTPSPDHLGFGLGMYACPGRHIASTVMKVTLCHILLKYDFELAEGCTPRVIEYGSFLLADPTARVSIRRRKEEIQL</sequence>